<accession>B0RE24</accession>
<name>LIPA_CLASE</name>
<organism>
    <name type="scientific">Clavibacter sepedonicus</name>
    <name type="common">Clavibacter michiganensis subsp. sepedonicus</name>
    <dbReference type="NCBI Taxonomy" id="31964"/>
    <lineage>
        <taxon>Bacteria</taxon>
        <taxon>Bacillati</taxon>
        <taxon>Actinomycetota</taxon>
        <taxon>Actinomycetes</taxon>
        <taxon>Micrococcales</taxon>
        <taxon>Microbacteriaceae</taxon>
        <taxon>Clavibacter</taxon>
    </lineage>
</organism>
<evidence type="ECO:0000255" key="1">
    <source>
        <dbReference type="HAMAP-Rule" id="MF_00206"/>
    </source>
</evidence>
<evidence type="ECO:0000255" key="2">
    <source>
        <dbReference type="PROSITE-ProRule" id="PRU01266"/>
    </source>
</evidence>
<feature type="chain" id="PRO_1000204144" description="Lipoyl synthase">
    <location>
        <begin position="1"/>
        <end position="329"/>
    </location>
</feature>
<feature type="domain" description="Radical SAM core" evidence="2">
    <location>
        <begin position="67"/>
        <end position="281"/>
    </location>
</feature>
<feature type="binding site" evidence="1">
    <location>
        <position position="55"/>
    </location>
    <ligand>
        <name>[4Fe-4S] cluster</name>
        <dbReference type="ChEBI" id="CHEBI:49883"/>
        <label>1</label>
    </ligand>
</feature>
<feature type="binding site" evidence="1">
    <location>
        <position position="60"/>
    </location>
    <ligand>
        <name>[4Fe-4S] cluster</name>
        <dbReference type="ChEBI" id="CHEBI:49883"/>
        <label>1</label>
    </ligand>
</feature>
<feature type="binding site" evidence="1">
    <location>
        <position position="66"/>
    </location>
    <ligand>
        <name>[4Fe-4S] cluster</name>
        <dbReference type="ChEBI" id="CHEBI:49883"/>
        <label>1</label>
    </ligand>
</feature>
<feature type="binding site" evidence="1">
    <location>
        <position position="81"/>
    </location>
    <ligand>
        <name>[4Fe-4S] cluster</name>
        <dbReference type="ChEBI" id="CHEBI:49883"/>
        <label>2</label>
        <note>4Fe-4S-S-AdoMet</note>
    </ligand>
</feature>
<feature type="binding site" evidence="1">
    <location>
        <position position="85"/>
    </location>
    <ligand>
        <name>[4Fe-4S] cluster</name>
        <dbReference type="ChEBI" id="CHEBI:49883"/>
        <label>2</label>
        <note>4Fe-4S-S-AdoMet</note>
    </ligand>
</feature>
<feature type="binding site" evidence="1">
    <location>
        <position position="88"/>
    </location>
    <ligand>
        <name>[4Fe-4S] cluster</name>
        <dbReference type="ChEBI" id="CHEBI:49883"/>
        <label>2</label>
        <note>4Fe-4S-S-AdoMet</note>
    </ligand>
</feature>
<feature type="binding site" evidence="1">
    <location>
        <position position="292"/>
    </location>
    <ligand>
        <name>[4Fe-4S] cluster</name>
        <dbReference type="ChEBI" id="CHEBI:49883"/>
        <label>1</label>
    </ligand>
</feature>
<keyword id="KW-0004">4Fe-4S</keyword>
<keyword id="KW-0963">Cytoplasm</keyword>
<keyword id="KW-0408">Iron</keyword>
<keyword id="KW-0411">Iron-sulfur</keyword>
<keyword id="KW-0479">Metal-binding</keyword>
<keyword id="KW-0949">S-adenosyl-L-methionine</keyword>
<keyword id="KW-0808">Transferase</keyword>
<gene>
    <name evidence="1" type="primary">lipA</name>
    <name type="ordered locus">CMS1883</name>
</gene>
<proteinExistence type="inferred from homology"/>
<sequence>MSAAPEGRRMLRLEVRNAETPIERKPEWIKTKARMGPEYQALQQLVKTEDLHTVCQEAACPNIYECWEDREATFLIGGSQCTRRCDFCQIDTGKPADYDTDEPRRVADSVRRMGLRYATVTGVARDDLPDEGAWLHAETVRRIHADNPGTGVEILATDFSGNPDLLAEVFSSRPEVFAHNVETVPRIFKRIRPAFRYERSLDVITQGRDADLITKSNLILGMGETREEVSEALADLHDAGCDIITVTQYLRPSPRHLPVARWVRPEEFVEIKAEAEAIGFLGVLAGPLVRSSYRAGRLYAQSMSAKGRELPASLAHLADPANGFAQAVG</sequence>
<protein>
    <recommendedName>
        <fullName evidence="1">Lipoyl synthase</fullName>
        <ecNumber evidence="1">2.8.1.8</ecNumber>
    </recommendedName>
    <alternativeName>
        <fullName evidence="1">Lip-syn</fullName>
        <shortName evidence="1">LS</shortName>
    </alternativeName>
    <alternativeName>
        <fullName evidence="1">Lipoate synthase</fullName>
    </alternativeName>
    <alternativeName>
        <fullName evidence="1">Lipoic acid synthase</fullName>
    </alternativeName>
    <alternativeName>
        <fullName evidence="1">Sulfur insertion protein LipA</fullName>
    </alternativeName>
</protein>
<reference key="1">
    <citation type="journal article" date="2008" name="J. Bacteriol.">
        <title>Genome of the actinomycete plant pathogen Clavibacter michiganensis subsp. sepedonicus suggests recent niche adaptation.</title>
        <authorList>
            <person name="Bentley S.D."/>
            <person name="Corton C."/>
            <person name="Brown S.E."/>
            <person name="Barron A."/>
            <person name="Clark L."/>
            <person name="Doggett J."/>
            <person name="Harris B."/>
            <person name="Ormond D."/>
            <person name="Quail M.A."/>
            <person name="May G."/>
            <person name="Francis D."/>
            <person name="Knudson D."/>
            <person name="Parkhill J."/>
            <person name="Ishimaru C.A."/>
        </authorList>
    </citation>
    <scope>NUCLEOTIDE SEQUENCE [LARGE SCALE GENOMIC DNA]</scope>
    <source>
        <strain>ATCC 33113 / DSM 20744 / JCM 9667 / LMG 2889 / ICMP 2535 / C-1</strain>
    </source>
</reference>
<comment type="function">
    <text evidence="1">Catalyzes the radical-mediated insertion of two sulfur atoms into the C-6 and C-8 positions of the octanoyl moiety bound to the lipoyl domains of lipoate-dependent enzymes, thereby converting the octanoylated domains into lipoylated derivatives.</text>
</comment>
<comment type="catalytic activity">
    <reaction evidence="1">
        <text>[[Fe-S] cluster scaffold protein carrying a second [4Fe-4S](2+) cluster] + N(6)-octanoyl-L-lysyl-[protein] + 2 oxidized [2Fe-2S]-[ferredoxin] + 2 S-adenosyl-L-methionine + 4 H(+) = [[Fe-S] cluster scaffold protein] + N(6)-[(R)-dihydrolipoyl]-L-lysyl-[protein] + 4 Fe(3+) + 2 hydrogen sulfide + 2 5'-deoxyadenosine + 2 L-methionine + 2 reduced [2Fe-2S]-[ferredoxin]</text>
        <dbReference type="Rhea" id="RHEA:16585"/>
        <dbReference type="Rhea" id="RHEA-COMP:9928"/>
        <dbReference type="Rhea" id="RHEA-COMP:10000"/>
        <dbReference type="Rhea" id="RHEA-COMP:10001"/>
        <dbReference type="Rhea" id="RHEA-COMP:10475"/>
        <dbReference type="Rhea" id="RHEA-COMP:14568"/>
        <dbReference type="Rhea" id="RHEA-COMP:14569"/>
        <dbReference type="ChEBI" id="CHEBI:15378"/>
        <dbReference type="ChEBI" id="CHEBI:17319"/>
        <dbReference type="ChEBI" id="CHEBI:29034"/>
        <dbReference type="ChEBI" id="CHEBI:29919"/>
        <dbReference type="ChEBI" id="CHEBI:33722"/>
        <dbReference type="ChEBI" id="CHEBI:33737"/>
        <dbReference type="ChEBI" id="CHEBI:33738"/>
        <dbReference type="ChEBI" id="CHEBI:57844"/>
        <dbReference type="ChEBI" id="CHEBI:59789"/>
        <dbReference type="ChEBI" id="CHEBI:78809"/>
        <dbReference type="ChEBI" id="CHEBI:83100"/>
        <dbReference type="EC" id="2.8.1.8"/>
    </reaction>
</comment>
<comment type="cofactor">
    <cofactor evidence="1">
        <name>[4Fe-4S] cluster</name>
        <dbReference type="ChEBI" id="CHEBI:49883"/>
    </cofactor>
    <text evidence="1">Binds 2 [4Fe-4S] clusters per subunit. One cluster is coordinated with 3 cysteines and an exchangeable S-adenosyl-L-methionine.</text>
</comment>
<comment type="pathway">
    <text evidence="1">Protein modification; protein lipoylation via endogenous pathway; protein N(6)-(lipoyl)lysine from octanoyl-[acyl-carrier-protein]: step 2/2.</text>
</comment>
<comment type="subcellular location">
    <subcellularLocation>
        <location evidence="1">Cytoplasm</location>
    </subcellularLocation>
</comment>
<comment type="similarity">
    <text evidence="1">Belongs to the radical SAM superfamily. Lipoyl synthase family.</text>
</comment>
<dbReference type="EC" id="2.8.1.8" evidence="1"/>
<dbReference type="EMBL" id="AM849034">
    <property type="protein sequence ID" value="CAQ01985.1"/>
    <property type="molecule type" value="Genomic_DNA"/>
</dbReference>
<dbReference type="SMR" id="B0RE24"/>
<dbReference type="STRING" id="31964.CMS1883"/>
<dbReference type="KEGG" id="cms:CMS1883"/>
<dbReference type="eggNOG" id="COG0320">
    <property type="taxonomic scope" value="Bacteria"/>
</dbReference>
<dbReference type="HOGENOM" id="CLU_033144_2_1_11"/>
<dbReference type="OrthoDB" id="9787898at2"/>
<dbReference type="UniPathway" id="UPA00538">
    <property type="reaction ID" value="UER00593"/>
</dbReference>
<dbReference type="Proteomes" id="UP000001318">
    <property type="component" value="Chromosome"/>
</dbReference>
<dbReference type="GO" id="GO:0005737">
    <property type="term" value="C:cytoplasm"/>
    <property type="evidence" value="ECO:0007669"/>
    <property type="project" value="UniProtKB-SubCell"/>
</dbReference>
<dbReference type="GO" id="GO:0051539">
    <property type="term" value="F:4 iron, 4 sulfur cluster binding"/>
    <property type="evidence" value="ECO:0007669"/>
    <property type="project" value="UniProtKB-UniRule"/>
</dbReference>
<dbReference type="GO" id="GO:0016992">
    <property type="term" value="F:lipoate synthase activity"/>
    <property type="evidence" value="ECO:0007669"/>
    <property type="project" value="UniProtKB-UniRule"/>
</dbReference>
<dbReference type="GO" id="GO:0046872">
    <property type="term" value="F:metal ion binding"/>
    <property type="evidence" value="ECO:0007669"/>
    <property type="project" value="UniProtKB-KW"/>
</dbReference>
<dbReference type="CDD" id="cd01335">
    <property type="entry name" value="Radical_SAM"/>
    <property type="match status" value="1"/>
</dbReference>
<dbReference type="Gene3D" id="3.20.20.70">
    <property type="entry name" value="Aldolase class I"/>
    <property type="match status" value="1"/>
</dbReference>
<dbReference type="HAMAP" id="MF_00206">
    <property type="entry name" value="Lipoyl_synth"/>
    <property type="match status" value="1"/>
</dbReference>
<dbReference type="InterPro" id="IPR013785">
    <property type="entry name" value="Aldolase_TIM"/>
</dbReference>
<dbReference type="InterPro" id="IPR006638">
    <property type="entry name" value="Elp3/MiaA/NifB-like_rSAM"/>
</dbReference>
<dbReference type="InterPro" id="IPR031691">
    <property type="entry name" value="LIAS_N"/>
</dbReference>
<dbReference type="InterPro" id="IPR003698">
    <property type="entry name" value="Lipoyl_synth"/>
</dbReference>
<dbReference type="InterPro" id="IPR007197">
    <property type="entry name" value="rSAM"/>
</dbReference>
<dbReference type="NCBIfam" id="TIGR00510">
    <property type="entry name" value="lipA"/>
    <property type="match status" value="1"/>
</dbReference>
<dbReference type="NCBIfam" id="NF004019">
    <property type="entry name" value="PRK05481.1"/>
    <property type="match status" value="1"/>
</dbReference>
<dbReference type="NCBIfam" id="NF009544">
    <property type="entry name" value="PRK12928.1"/>
    <property type="match status" value="1"/>
</dbReference>
<dbReference type="PANTHER" id="PTHR10949">
    <property type="entry name" value="LIPOYL SYNTHASE"/>
    <property type="match status" value="1"/>
</dbReference>
<dbReference type="PANTHER" id="PTHR10949:SF0">
    <property type="entry name" value="LIPOYL SYNTHASE, MITOCHONDRIAL"/>
    <property type="match status" value="1"/>
</dbReference>
<dbReference type="Pfam" id="PF16881">
    <property type="entry name" value="LIAS_N"/>
    <property type="match status" value="1"/>
</dbReference>
<dbReference type="Pfam" id="PF04055">
    <property type="entry name" value="Radical_SAM"/>
    <property type="match status" value="1"/>
</dbReference>
<dbReference type="PIRSF" id="PIRSF005963">
    <property type="entry name" value="Lipoyl_synth"/>
    <property type="match status" value="1"/>
</dbReference>
<dbReference type="SFLD" id="SFLDF00271">
    <property type="entry name" value="lipoyl_synthase"/>
    <property type="match status" value="1"/>
</dbReference>
<dbReference type="SFLD" id="SFLDG01058">
    <property type="entry name" value="lipoyl_synthase_like"/>
    <property type="match status" value="1"/>
</dbReference>
<dbReference type="SMART" id="SM00729">
    <property type="entry name" value="Elp3"/>
    <property type="match status" value="1"/>
</dbReference>
<dbReference type="SUPFAM" id="SSF102114">
    <property type="entry name" value="Radical SAM enzymes"/>
    <property type="match status" value="1"/>
</dbReference>
<dbReference type="PROSITE" id="PS51918">
    <property type="entry name" value="RADICAL_SAM"/>
    <property type="match status" value="1"/>
</dbReference>